<name>LPXC_GEOSM</name>
<dbReference type="EC" id="3.5.1.108" evidence="1"/>
<dbReference type="EMBL" id="CP001661">
    <property type="protein sequence ID" value="ACT19385.1"/>
    <property type="molecule type" value="Genomic_DNA"/>
</dbReference>
<dbReference type="SMR" id="C6E4T9"/>
<dbReference type="STRING" id="443144.GM21_3360"/>
<dbReference type="KEGG" id="gem:GM21_3360"/>
<dbReference type="eggNOG" id="COG0774">
    <property type="taxonomic scope" value="Bacteria"/>
</dbReference>
<dbReference type="HOGENOM" id="CLU_046528_1_0_7"/>
<dbReference type="OrthoDB" id="9802746at2"/>
<dbReference type="UniPathway" id="UPA00359">
    <property type="reaction ID" value="UER00478"/>
</dbReference>
<dbReference type="GO" id="GO:0016020">
    <property type="term" value="C:membrane"/>
    <property type="evidence" value="ECO:0007669"/>
    <property type="project" value="GOC"/>
</dbReference>
<dbReference type="GO" id="GO:0046872">
    <property type="term" value="F:metal ion binding"/>
    <property type="evidence" value="ECO:0007669"/>
    <property type="project" value="UniProtKB-KW"/>
</dbReference>
<dbReference type="GO" id="GO:0103117">
    <property type="term" value="F:UDP-3-O-acyl-N-acetylglucosamine deacetylase activity"/>
    <property type="evidence" value="ECO:0007669"/>
    <property type="project" value="UniProtKB-UniRule"/>
</dbReference>
<dbReference type="GO" id="GO:0009245">
    <property type="term" value="P:lipid A biosynthetic process"/>
    <property type="evidence" value="ECO:0007669"/>
    <property type="project" value="UniProtKB-UniRule"/>
</dbReference>
<dbReference type="Gene3D" id="3.30.230.20">
    <property type="entry name" value="lpxc deacetylase, domain 1"/>
    <property type="match status" value="1"/>
</dbReference>
<dbReference type="Gene3D" id="3.30.1700.10">
    <property type="entry name" value="lpxc deacetylase, domain 2"/>
    <property type="match status" value="1"/>
</dbReference>
<dbReference type="HAMAP" id="MF_00388">
    <property type="entry name" value="LpxC"/>
    <property type="match status" value="1"/>
</dbReference>
<dbReference type="InterPro" id="IPR020568">
    <property type="entry name" value="Ribosomal_Su5_D2-typ_SF"/>
</dbReference>
<dbReference type="InterPro" id="IPR004463">
    <property type="entry name" value="UDP-acyl_GlcNac_deAcase"/>
</dbReference>
<dbReference type="InterPro" id="IPR011334">
    <property type="entry name" value="UDP-acyl_GlcNac_deAcase_C"/>
</dbReference>
<dbReference type="InterPro" id="IPR015870">
    <property type="entry name" value="UDP-acyl_N-AcGlcN_deAcase_N"/>
</dbReference>
<dbReference type="NCBIfam" id="TIGR00325">
    <property type="entry name" value="lpxC"/>
    <property type="match status" value="1"/>
</dbReference>
<dbReference type="PANTHER" id="PTHR33694">
    <property type="entry name" value="UDP-3-O-ACYL-N-ACETYLGLUCOSAMINE DEACETYLASE 1, MITOCHONDRIAL-RELATED"/>
    <property type="match status" value="1"/>
</dbReference>
<dbReference type="PANTHER" id="PTHR33694:SF1">
    <property type="entry name" value="UDP-3-O-ACYL-N-ACETYLGLUCOSAMINE DEACETYLASE 1, MITOCHONDRIAL-RELATED"/>
    <property type="match status" value="1"/>
</dbReference>
<dbReference type="Pfam" id="PF03331">
    <property type="entry name" value="LpxC"/>
    <property type="match status" value="1"/>
</dbReference>
<dbReference type="SUPFAM" id="SSF54211">
    <property type="entry name" value="Ribosomal protein S5 domain 2-like"/>
    <property type="match status" value="2"/>
</dbReference>
<gene>
    <name evidence="1" type="primary">lpxC</name>
    <name type="ordered locus">GM21_3360</name>
</gene>
<accession>C6E4T9</accession>
<sequence>MIFQQTLGNKATFSGIGLHTGKTITLTLRPAEAGTGIVFHRVDLSPAVSIEAHASNVVNTRLSTTIGRGDASVSTIEHLMAALYGCGIDNAHVDIDGPEVPIMDGSAAPFVAAIAKAGVKMSGKARKYLVVKKPVTVVDGDKKATIIPSRHYKISFDMQFAHPAVKSQFRSLEFSQESFIGDFAAARTFGFLAEVEMMKSHGLALGGSLENAVVIGDNGVINPEGLRFQDEFVRHKILDSVGDLSLAGHRLIGHVKATKSGHDLNHKLVTELLKRPDCYTLIEFTPQAFNAPFNIGIPELSWLEA</sequence>
<evidence type="ECO:0000255" key="1">
    <source>
        <dbReference type="HAMAP-Rule" id="MF_00388"/>
    </source>
</evidence>
<protein>
    <recommendedName>
        <fullName evidence="1">UDP-3-O-acyl-N-acetylglucosamine deacetylase</fullName>
        <shortName evidence="1">UDP-3-O-acyl-GlcNAc deacetylase</shortName>
        <ecNumber evidence="1">3.5.1.108</ecNumber>
    </recommendedName>
    <alternativeName>
        <fullName evidence="1">UDP-3-O-[R-3-hydroxymyristoyl]-N-acetylglucosamine deacetylase</fullName>
    </alternativeName>
</protein>
<feature type="chain" id="PRO_1000205805" description="UDP-3-O-acyl-N-acetylglucosamine deacetylase">
    <location>
        <begin position="1"/>
        <end position="305"/>
    </location>
</feature>
<feature type="active site" description="Proton donor" evidence="1">
    <location>
        <position position="262"/>
    </location>
</feature>
<feature type="binding site" evidence="1">
    <location>
        <position position="78"/>
    </location>
    <ligand>
        <name>Zn(2+)</name>
        <dbReference type="ChEBI" id="CHEBI:29105"/>
    </ligand>
</feature>
<feature type="binding site" evidence="1">
    <location>
        <position position="235"/>
    </location>
    <ligand>
        <name>Zn(2+)</name>
        <dbReference type="ChEBI" id="CHEBI:29105"/>
    </ligand>
</feature>
<feature type="binding site" evidence="1">
    <location>
        <position position="239"/>
    </location>
    <ligand>
        <name>Zn(2+)</name>
        <dbReference type="ChEBI" id="CHEBI:29105"/>
    </ligand>
</feature>
<reference key="1">
    <citation type="submission" date="2009-07" db="EMBL/GenBank/DDBJ databases">
        <title>Complete sequence of Geobacter sp. M21.</title>
        <authorList>
            <consortium name="US DOE Joint Genome Institute"/>
            <person name="Lucas S."/>
            <person name="Copeland A."/>
            <person name="Lapidus A."/>
            <person name="Glavina del Rio T."/>
            <person name="Dalin E."/>
            <person name="Tice H."/>
            <person name="Bruce D."/>
            <person name="Goodwin L."/>
            <person name="Pitluck S."/>
            <person name="Saunders E."/>
            <person name="Brettin T."/>
            <person name="Detter J.C."/>
            <person name="Han C."/>
            <person name="Larimer F."/>
            <person name="Land M."/>
            <person name="Hauser L."/>
            <person name="Kyrpides N."/>
            <person name="Ovchinnikova G."/>
            <person name="Lovley D."/>
        </authorList>
    </citation>
    <scope>NUCLEOTIDE SEQUENCE [LARGE SCALE GENOMIC DNA]</scope>
    <source>
        <strain>M21</strain>
    </source>
</reference>
<organism>
    <name type="scientific">Geobacter sp. (strain M21)</name>
    <dbReference type="NCBI Taxonomy" id="443144"/>
    <lineage>
        <taxon>Bacteria</taxon>
        <taxon>Pseudomonadati</taxon>
        <taxon>Thermodesulfobacteriota</taxon>
        <taxon>Desulfuromonadia</taxon>
        <taxon>Geobacterales</taxon>
        <taxon>Geobacteraceae</taxon>
        <taxon>Geobacter</taxon>
    </lineage>
</organism>
<keyword id="KW-0378">Hydrolase</keyword>
<keyword id="KW-0441">Lipid A biosynthesis</keyword>
<keyword id="KW-0444">Lipid biosynthesis</keyword>
<keyword id="KW-0443">Lipid metabolism</keyword>
<keyword id="KW-0479">Metal-binding</keyword>
<keyword id="KW-0862">Zinc</keyword>
<comment type="function">
    <text evidence="1">Catalyzes the hydrolysis of UDP-3-O-myristoyl-N-acetylglucosamine to form UDP-3-O-myristoylglucosamine and acetate, the committed step in lipid A biosynthesis.</text>
</comment>
<comment type="catalytic activity">
    <reaction evidence="1">
        <text>a UDP-3-O-[(3R)-3-hydroxyacyl]-N-acetyl-alpha-D-glucosamine + H2O = a UDP-3-O-[(3R)-3-hydroxyacyl]-alpha-D-glucosamine + acetate</text>
        <dbReference type="Rhea" id="RHEA:67816"/>
        <dbReference type="ChEBI" id="CHEBI:15377"/>
        <dbReference type="ChEBI" id="CHEBI:30089"/>
        <dbReference type="ChEBI" id="CHEBI:137740"/>
        <dbReference type="ChEBI" id="CHEBI:173225"/>
        <dbReference type="EC" id="3.5.1.108"/>
    </reaction>
</comment>
<comment type="cofactor">
    <cofactor evidence="1">
        <name>Zn(2+)</name>
        <dbReference type="ChEBI" id="CHEBI:29105"/>
    </cofactor>
</comment>
<comment type="pathway">
    <text evidence="1">Glycolipid biosynthesis; lipid IV(A) biosynthesis; lipid IV(A) from (3R)-3-hydroxytetradecanoyl-[acyl-carrier-protein] and UDP-N-acetyl-alpha-D-glucosamine: step 2/6.</text>
</comment>
<comment type="similarity">
    <text evidence="1">Belongs to the LpxC family.</text>
</comment>
<proteinExistence type="inferred from homology"/>